<reference key="1">
    <citation type="submission" date="2006-11" db="EMBL/GenBank/DDBJ databases">
        <title>Identification and characterization of a new conjugation/ type IVA secretion system (trb/tra) of L. pneumophila Corby localized on a mobile genomic island.</title>
        <authorList>
            <person name="Gloeckner G."/>
            <person name="Albert-Weissenberger C."/>
            <person name="Weinmann E."/>
            <person name="Jacobi S."/>
            <person name="Schunder E."/>
            <person name="Steinert M."/>
            <person name="Buchrieser C."/>
            <person name="Hacker J."/>
            <person name="Heuner K."/>
        </authorList>
    </citation>
    <scope>NUCLEOTIDE SEQUENCE [LARGE SCALE GENOMIC DNA]</scope>
    <source>
        <strain>Corby</strain>
    </source>
</reference>
<gene>
    <name evidence="1" type="primary">rsmG</name>
    <name type="ordered locus">LPC_3176</name>
</gene>
<evidence type="ECO:0000255" key="1">
    <source>
        <dbReference type="HAMAP-Rule" id="MF_00074"/>
    </source>
</evidence>
<proteinExistence type="inferred from homology"/>
<organism>
    <name type="scientific">Legionella pneumophila (strain Corby)</name>
    <dbReference type="NCBI Taxonomy" id="400673"/>
    <lineage>
        <taxon>Bacteria</taxon>
        <taxon>Pseudomonadati</taxon>
        <taxon>Pseudomonadota</taxon>
        <taxon>Gammaproteobacteria</taxon>
        <taxon>Legionellales</taxon>
        <taxon>Legionellaceae</taxon>
        <taxon>Legionella</taxon>
    </lineage>
</organism>
<dbReference type="EC" id="2.1.1.170" evidence="1"/>
<dbReference type="EMBL" id="CP000675">
    <property type="protein sequence ID" value="ABQ57063.1"/>
    <property type="molecule type" value="Genomic_DNA"/>
</dbReference>
<dbReference type="RefSeq" id="WP_011947768.1">
    <property type="nucleotide sequence ID" value="NZ_JAPMSS010000004.1"/>
</dbReference>
<dbReference type="SMR" id="A5II63"/>
<dbReference type="KEGG" id="lpc:LPC_3176"/>
<dbReference type="HOGENOM" id="CLU_065341_2_0_6"/>
<dbReference type="GO" id="GO:0005829">
    <property type="term" value="C:cytosol"/>
    <property type="evidence" value="ECO:0007669"/>
    <property type="project" value="TreeGrafter"/>
</dbReference>
<dbReference type="GO" id="GO:0070043">
    <property type="term" value="F:rRNA (guanine-N7-)-methyltransferase activity"/>
    <property type="evidence" value="ECO:0007669"/>
    <property type="project" value="UniProtKB-UniRule"/>
</dbReference>
<dbReference type="CDD" id="cd02440">
    <property type="entry name" value="AdoMet_MTases"/>
    <property type="match status" value="1"/>
</dbReference>
<dbReference type="Gene3D" id="3.40.50.150">
    <property type="entry name" value="Vaccinia Virus protein VP39"/>
    <property type="match status" value="1"/>
</dbReference>
<dbReference type="HAMAP" id="MF_00074">
    <property type="entry name" value="16SrRNA_methyltr_G"/>
    <property type="match status" value="1"/>
</dbReference>
<dbReference type="InterPro" id="IPR003682">
    <property type="entry name" value="rRNA_ssu_MeTfrase_G"/>
</dbReference>
<dbReference type="InterPro" id="IPR029063">
    <property type="entry name" value="SAM-dependent_MTases_sf"/>
</dbReference>
<dbReference type="NCBIfam" id="TIGR00138">
    <property type="entry name" value="rsmG_gidB"/>
    <property type="match status" value="1"/>
</dbReference>
<dbReference type="PANTHER" id="PTHR31760">
    <property type="entry name" value="S-ADENOSYL-L-METHIONINE-DEPENDENT METHYLTRANSFERASES SUPERFAMILY PROTEIN"/>
    <property type="match status" value="1"/>
</dbReference>
<dbReference type="PANTHER" id="PTHR31760:SF0">
    <property type="entry name" value="S-ADENOSYL-L-METHIONINE-DEPENDENT METHYLTRANSFERASES SUPERFAMILY PROTEIN"/>
    <property type="match status" value="1"/>
</dbReference>
<dbReference type="Pfam" id="PF02527">
    <property type="entry name" value="GidB"/>
    <property type="match status" value="1"/>
</dbReference>
<dbReference type="PIRSF" id="PIRSF003078">
    <property type="entry name" value="GidB"/>
    <property type="match status" value="1"/>
</dbReference>
<dbReference type="SUPFAM" id="SSF53335">
    <property type="entry name" value="S-adenosyl-L-methionine-dependent methyltransferases"/>
    <property type="match status" value="1"/>
</dbReference>
<protein>
    <recommendedName>
        <fullName evidence="1">Ribosomal RNA small subunit methyltransferase G</fullName>
        <ecNumber evidence="1">2.1.1.170</ecNumber>
    </recommendedName>
    <alternativeName>
        <fullName evidence="1">16S rRNA 7-methylguanosine methyltransferase</fullName>
        <shortName evidence="1">16S rRNA m7G methyltransferase</shortName>
    </alternativeName>
</protein>
<keyword id="KW-0963">Cytoplasm</keyword>
<keyword id="KW-0489">Methyltransferase</keyword>
<keyword id="KW-0698">rRNA processing</keyword>
<keyword id="KW-0949">S-adenosyl-L-methionine</keyword>
<keyword id="KW-0808">Transferase</keyword>
<feature type="chain" id="PRO_1000010165" description="Ribosomal RNA small subunit methyltransferase G">
    <location>
        <begin position="1"/>
        <end position="208"/>
    </location>
</feature>
<feature type="binding site" evidence="1">
    <location>
        <position position="76"/>
    </location>
    <ligand>
        <name>S-adenosyl-L-methionine</name>
        <dbReference type="ChEBI" id="CHEBI:59789"/>
    </ligand>
</feature>
<feature type="binding site" evidence="1">
    <location>
        <position position="81"/>
    </location>
    <ligand>
        <name>S-adenosyl-L-methionine</name>
        <dbReference type="ChEBI" id="CHEBI:59789"/>
    </ligand>
</feature>
<feature type="binding site" evidence="1">
    <location>
        <begin position="127"/>
        <end position="128"/>
    </location>
    <ligand>
        <name>S-adenosyl-L-methionine</name>
        <dbReference type="ChEBI" id="CHEBI:59789"/>
    </ligand>
</feature>
<feature type="binding site" evidence="1">
    <location>
        <position position="142"/>
    </location>
    <ligand>
        <name>S-adenosyl-L-methionine</name>
        <dbReference type="ChEBI" id="CHEBI:59789"/>
    </ligand>
</feature>
<name>RSMG_LEGPC</name>
<sequence length="208" mass="23545">MIGNTKIKSLLEEGLTAFQLDAIGDLLLDFLLLLNKWNKTYNLTAIRDIETMVSKHLFDSLAILPWIKGNHIIDVGTGPGLPGIPLAIAKPDLQFVLLDSNGKKISFLNEVKRQLNIKNIEPIQIRVENYHPNQGFDTVISRAFSSLEQMIKWTEHLVAQDGLWLAMKGRFPDTELVPIHQTYRVERYAVPGIEGERCCVLINNTNKE</sequence>
<comment type="function">
    <text evidence="1">Specifically methylates the N7 position of guanine in position 527 of 16S rRNA.</text>
</comment>
<comment type="catalytic activity">
    <reaction evidence="1">
        <text>guanosine(527) in 16S rRNA + S-adenosyl-L-methionine = N(7)-methylguanosine(527) in 16S rRNA + S-adenosyl-L-homocysteine</text>
        <dbReference type="Rhea" id="RHEA:42732"/>
        <dbReference type="Rhea" id="RHEA-COMP:10209"/>
        <dbReference type="Rhea" id="RHEA-COMP:10210"/>
        <dbReference type="ChEBI" id="CHEBI:57856"/>
        <dbReference type="ChEBI" id="CHEBI:59789"/>
        <dbReference type="ChEBI" id="CHEBI:74269"/>
        <dbReference type="ChEBI" id="CHEBI:74480"/>
        <dbReference type="EC" id="2.1.1.170"/>
    </reaction>
</comment>
<comment type="subcellular location">
    <subcellularLocation>
        <location evidence="1">Cytoplasm</location>
    </subcellularLocation>
</comment>
<comment type="similarity">
    <text evidence="1">Belongs to the methyltransferase superfamily. RNA methyltransferase RsmG family.</text>
</comment>
<accession>A5II63</accession>